<dbReference type="EC" id="5.4.2.7" evidence="1"/>
<dbReference type="EMBL" id="CP000241">
    <property type="protein sequence ID" value="ABF85185.1"/>
    <property type="molecule type" value="Genomic_DNA"/>
</dbReference>
<dbReference type="RefSeq" id="WP_001172148.1">
    <property type="nucleotide sequence ID" value="NC_008086.1"/>
</dbReference>
<dbReference type="SMR" id="Q1CS87"/>
<dbReference type="KEGG" id="hpa:HPAG1_1118"/>
<dbReference type="HOGENOM" id="CLU_053861_0_0_7"/>
<dbReference type="UniPathway" id="UPA00002">
    <property type="reaction ID" value="UER00467"/>
</dbReference>
<dbReference type="GO" id="GO:0005829">
    <property type="term" value="C:cytosol"/>
    <property type="evidence" value="ECO:0007669"/>
    <property type="project" value="TreeGrafter"/>
</dbReference>
<dbReference type="GO" id="GO:0000287">
    <property type="term" value="F:magnesium ion binding"/>
    <property type="evidence" value="ECO:0007669"/>
    <property type="project" value="InterPro"/>
</dbReference>
<dbReference type="GO" id="GO:0030145">
    <property type="term" value="F:manganese ion binding"/>
    <property type="evidence" value="ECO:0007669"/>
    <property type="project" value="UniProtKB-UniRule"/>
</dbReference>
<dbReference type="GO" id="GO:0008973">
    <property type="term" value="F:phosphopentomutase activity"/>
    <property type="evidence" value="ECO:0007669"/>
    <property type="project" value="UniProtKB-UniRule"/>
</dbReference>
<dbReference type="GO" id="GO:0006018">
    <property type="term" value="P:2-deoxyribose 1-phosphate catabolic process"/>
    <property type="evidence" value="ECO:0007669"/>
    <property type="project" value="UniProtKB-UniRule"/>
</dbReference>
<dbReference type="GO" id="GO:0006015">
    <property type="term" value="P:5-phosphoribose 1-diphosphate biosynthetic process"/>
    <property type="evidence" value="ECO:0007669"/>
    <property type="project" value="UniProtKB-UniPathway"/>
</dbReference>
<dbReference type="GO" id="GO:0043094">
    <property type="term" value="P:metabolic compound salvage"/>
    <property type="evidence" value="ECO:0007669"/>
    <property type="project" value="InterPro"/>
</dbReference>
<dbReference type="GO" id="GO:0009117">
    <property type="term" value="P:nucleotide metabolic process"/>
    <property type="evidence" value="ECO:0007669"/>
    <property type="project" value="InterPro"/>
</dbReference>
<dbReference type="CDD" id="cd16009">
    <property type="entry name" value="PPM"/>
    <property type="match status" value="1"/>
</dbReference>
<dbReference type="FunFam" id="3.30.70.1250:FF:000001">
    <property type="entry name" value="Phosphopentomutase"/>
    <property type="match status" value="1"/>
</dbReference>
<dbReference type="Gene3D" id="3.40.720.10">
    <property type="entry name" value="Alkaline Phosphatase, subunit A"/>
    <property type="match status" value="1"/>
</dbReference>
<dbReference type="Gene3D" id="3.30.70.1250">
    <property type="entry name" value="Phosphopentomutase"/>
    <property type="match status" value="1"/>
</dbReference>
<dbReference type="HAMAP" id="MF_00740">
    <property type="entry name" value="Phosphopentomut"/>
    <property type="match status" value="1"/>
</dbReference>
<dbReference type="InterPro" id="IPR017850">
    <property type="entry name" value="Alkaline_phosphatase_core_sf"/>
</dbReference>
<dbReference type="InterPro" id="IPR010045">
    <property type="entry name" value="DeoB"/>
</dbReference>
<dbReference type="InterPro" id="IPR006124">
    <property type="entry name" value="Metalloenzyme"/>
</dbReference>
<dbReference type="InterPro" id="IPR024052">
    <property type="entry name" value="Phosphopentomutase_DeoB_cap_sf"/>
</dbReference>
<dbReference type="NCBIfam" id="TIGR01696">
    <property type="entry name" value="deoB"/>
    <property type="match status" value="1"/>
</dbReference>
<dbReference type="NCBIfam" id="NF003766">
    <property type="entry name" value="PRK05362.1"/>
    <property type="match status" value="1"/>
</dbReference>
<dbReference type="PANTHER" id="PTHR21110">
    <property type="entry name" value="PHOSPHOPENTOMUTASE"/>
    <property type="match status" value="1"/>
</dbReference>
<dbReference type="PANTHER" id="PTHR21110:SF0">
    <property type="entry name" value="PHOSPHOPENTOMUTASE"/>
    <property type="match status" value="1"/>
</dbReference>
<dbReference type="Pfam" id="PF01676">
    <property type="entry name" value="Metalloenzyme"/>
    <property type="match status" value="1"/>
</dbReference>
<dbReference type="PIRSF" id="PIRSF001491">
    <property type="entry name" value="Ppentomutase"/>
    <property type="match status" value="1"/>
</dbReference>
<dbReference type="SUPFAM" id="SSF53649">
    <property type="entry name" value="Alkaline phosphatase-like"/>
    <property type="match status" value="1"/>
</dbReference>
<dbReference type="SUPFAM" id="SSF143856">
    <property type="entry name" value="DeoB insert domain-like"/>
    <property type="match status" value="1"/>
</dbReference>
<name>DEOB_HELPH</name>
<sequence>MQKRVVILLLDSFGIGASEDAKDFGDLGANTLGNIAKACFNNLADSNDRKGALKLPYLESLGLGLSALKATNELPLGFESKPNLIGAYAYAKELSSAKDTISGHWEMMGAPVLFEWGYFKDKNNSFPKEILDEIMRKTKIKGYLGNCHASGTEIIKDLGEKHLETLYPIFYTSADSVFQIAVHEEKFGLDNLYALCEEAFQILEPLKIARVIARPFIGANREDFKRTANRKDYAIKPHKKLLFETFIEEKQGEVISIGKIADIYAHVGITQKFKAGSLMELCDVTLEQIKNAKNNSLIFTNFVHFDSDYGHRRDISGYANALEYFDARLKEILDNLKENDLLILCADHGCDPSFKGTDHTREYIPVLFYHKDLQPAFLGKSESFADIGQSIAYFLGLSPLDYGKNLLNFKGQP</sequence>
<organism>
    <name type="scientific">Helicobacter pylori (strain HPAG1)</name>
    <dbReference type="NCBI Taxonomy" id="357544"/>
    <lineage>
        <taxon>Bacteria</taxon>
        <taxon>Pseudomonadati</taxon>
        <taxon>Campylobacterota</taxon>
        <taxon>Epsilonproteobacteria</taxon>
        <taxon>Campylobacterales</taxon>
        <taxon>Helicobacteraceae</taxon>
        <taxon>Helicobacter</taxon>
    </lineage>
</organism>
<evidence type="ECO:0000255" key="1">
    <source>
        <dbReference type="HAMAP-Rule" id="MF_00740"/>
    </source>
</evidence>
<protein>
    <recommendedName>
        <fullName evidence="1">Phosphopentomutase</fullName>
        <ecNumber evidence="1">5.4.2.7</ecNumber>
    </recommendedName>
    <alternativeName>
        <fullName evidence="1">Phosphodeoxyribomutase</fullName>
    </alternativeName>
</protein>
<feature type="chain" id="PRO_0000258288" description="Phosphopentomutase">
    <location>
        <begin position="1"/>
        <end position="413"/>
    </location>
</feature>
<feature type="binding site" evidence="1">
    <location>
        <position position="11"/>
    </location>
    <ligand>
        <name>Mn(2+)</name>
        <dbReference type="ChEBI" id="CHEBI:29035"/>
        <label>1</label>
    </ligand>
</feature>
<feature type="binding site" evidence="1">
    <location>
        <position position="306"/>
    </location>
    <ligand>
        <name>Mn(2+)</name>
        <dbReference type="ChEBI" id="CHEBI:29035"/>
        <label>2</label>
    </ligand>
</feature>
<feature type="binding site" evidence="1">
    <location>
        <position position="311"/>
    </location>
    <ligand>
        <name>Mn(2+)</name>
        <dbReference type="ChEBI" id="CHEBI:29035"/>
        <label>2</label>
    </ligand>
</feature>
<feature type="binding site" evidence="1">
    <location>
        <position position="347"/>
    </location>
    <ligand>
        <name>Mn(2+)</name>
        <dbReference type="ChEBI" id="CHEBI:29035"/>
        <label>1</label>
    </ligand>
</feature>
<feature type="binding site" evidence="1">
    <location>
        <position position="348"/>
    </location>
    <ligand>
        <name>Mn(2+)</name>
        <dbReference type="ChEBI" id="CHEBI:29035"/>
        <label>1</label>
    </ligand>
</feature>
<feature type="binding site" evidence="1">
    <location>
        <position position="359"/>
    </location>
    <ligand>
        <name>Mn(2+)</name>
        <dbReference type="ChEBI" id="CHEBI:29035"/>
        <label>2</label>
    </ligand>
</feature>
<accession>Q1CS87</accession>
<proteinExistence type="inferred from homology"/>
<keyword id="KW-0963">Cytoplasm</keyword>
<keyword id="KW-0413">Isomerase</keyword>
<keyword id="KW-0464">Manganese</keyword>
<keyword id="KW-0479">Metal-binding</keyword>
<gene>
    <name evidence="1" type="primary">deoB</name>
    <name type="ordered locus">HPAG1_1118</name>
</gene>
<reference key="1">
    <citation type="journal article" date="2006" name="Proc. Natl. Acad. Sci. U.S.A.">
        <title>The complete genome sequence of a chronic atrophic gastritis Helicobacter pylori strain: evolution during disease progression.</title>
        <authorList>
            <person name="Oh J.D."/>
            <person name="Kling-Baeckhed H."/>
            <person name="Giannakis M."/>
            <person name="Xu J."/>
            <person name="Fulton R.S."/>
            <person name="Fulton L.A."/>
            <person name="Cordum H.S."/>
            <person name="Wang C."/>
            <person name="Elliott G."/>
            <person name="Edwards J."/>
            <person name="Mardis E.R."/>
            <person name="Engstrand L.G."/>
            <person name="Gordon J.I."/>
        </authorList>
    </citation>
    <scope>NUCLEOTIDE SEQUENCE [LARGE SCALE GENOMIC DNA]</scope>
    <source>
        <strain>HPAG1</strain>
    </source>
</reference>
<comment type="function">
    <text evidence="1">Isomerase that catalyzes the conversion of deoxy-ribose 1-phosphate (dRib-1-P) and ribose 1-phosphate (Rib-1-P) to deoxy-ribose 5-phosphate (dRib-5-P) and ribose 5-phosphate (Rib-5-P), respectively.</text>
</comment>
<comment type="catalytic activity">
    <reaction evidence="1">
        <text>2-deoxy-alpha-D-ribose 1-phosphate = 2-deoxy-D-ribose 5-phosphate</text>
        <dbReference type="Rhea" id="RHEA:27658"/>
        <dbReference type="ChEBI" id="CHEBI:57259"/>
        <dbReference type="ChEBI" id="CHEBI:62877"/>
        <dbReference type="EC" id="5.4.2.7"/>
    </reaction>
</comment>
<comment type="catalytic activity">
    <reaction evidence="1">
        <text>alpha-D-ribose 1-phosphate = D-ribose 5-phosphate</text>
        <dbReference type="Rhea" id="RHEA:18793"/>
        <dbReference type="ChEBI" id="CHEBI:57720"/>
        <dbReference type="ChEBI" id="CHEBI:78346"/>
        <dbReference type="EC" id="5.4.2.7"/>
    </reaction>
</comment>
<comment type="cofactor">
    <cofactor evidence="1">
        <name>Mn(2+)</name>
        <dbReference type="ChEBI" id="CHEBI:29035"/>
    </cofactor>
    <text evidence="1">Binds 2 manganese ions.</text>
</comment>
<comment type="pathway">
    <text evidence="1">Carbohydrate degradation; 2-deoxy-D-ribose 1-phosphate degradation; D-glyceraldehyde 3-phosphate and acetaldehyde from 2-deoxy-alpha-D-ribose 1-phosphate: step 1/2.</text>
</comment>
<comment type="subcellular location">
    <subcellularLocation>
        <location evidence="1">Cytoplasm</location>
    </subcellularLocation>
</comment>
<comment type="similarity">
    <text evidence="1">Belongs to the phosphopentomutase family.</text>
</comment>